<sequence length="566" mass="60980">MDLHYDCAESPAAEQPSGKINKTAFKLFGKRKSGSGMPTIFGVKNKGDSKGTGKIGMVRSKTLDGLADVVLESNKKEEPCTEAGAGQLNPEKSPKVLTINADVSSNSSVAKSHSFFSLLKKNGKSENVRGEQAEQKAGSRQKRGLKGLFNSMRWSKKDKSYKDDKEGASESQPGLILPSSLTASLECIKEETQKPLCEKGKSTEDIPADVPLAEHSGDVNTSAEENSLKASEESPCSALITEQPQLEDAPLAQLQENLCQLPQPEVETLQNNKDEHVTGCGDVIADQDDDGGSSMGSKLVPGNGKKVMSKKNTNIVAYQGGGEEMASPEQVDETYVQELFSMIPPSEGASEKTEKVNGTTQASREVKCSDSAQDRNAIKPSKLKQVPVYRKERGDQNSKANEKRQCLRNSDEGYWDSPTPGQEEEEPRSVGKQALARDSCSGDALYDLYTDPDESIAKAQVEEPPLSHSHSKPLSPVTTSCPVKTASSNKESKIPISIKHLPVHTTNQGTDSSSGSATGHPHPVKSELPRTKIPVSKVLVRRVSNKAITETAAGKRAIHDPARKHH</sequence>
<evidence type="ECO:0000250" key="1"/>
<evidence type="ECO:0000256" key="2">
    <source>
        <dbReference type="SAM" id="MobiDB-lite"/>
    </source>
</evidence>
<evidence type="ECO:0000305" key="3"/>
<feature type="chain" id="PRO_0000416263" description="APC membrane recruitment protein 2">
    <location>
        <begin position="1"/>
        <end position="566"/>
    </location>
</feature>
<feature type="region of interest" description="Disordered" evidence="2">
    <location>
        <begin position="120"/>
        <end position="176"/>
    </location>
</feature>
<feature type="region of interest" description="Disordered" evidence="2">
    <location>
        <begin position="192"/>
        <end position="237"/>
    </location>
</feature>
<feature type="region of interest" description="Disordered" evidence="2">
    <location>
        <begin position="277"/>
        <end position="307"/>
    </location>
</feature>
<feature type="region of interest" description="Disordered" evidence="2">
    <location>
        <begin position="342"/>
        <end position="533"/>
    </location>
</feature>
<feature type="compositionally biased region" description="Basic and acidic residues" evidence="2">
    <location>
        <begin position="123"/>
        <end position="134"/>
    </location>
</feature>
<feature type="compositionally biased region" description="Basic and acidic residues" evidence="2">
    <location>
        <begin position="155"/>
        <end position="168"/>
    </location>
</feature>
<feature type="compositionally biased region" description="Basic and acidic residues" evidence="2">
    <location>
        <begin position="192"/>
        <end position="204"/>
    </location>
</feature>
<feature type="compositionally biased region" description="Basic and acidic residues" evidence="2">
    <location>
        <begin position="364"/>
        <end position="377"/>
    </location>
</feature>
<feature type="compositionally biased region" description="Basic and acidic residues" evidence="2">
    <location>
        <begin position="389"/>
        <end position="411"/>
    </location>
</feature>
<feature type="compositionally biased region" description="Low complexity" evidence="2">
    <location>
        <begin position="464"/>
        <end position="476"/>
    </location>
</feature>
<feature type="compositionally biased region" description="Polar residues" evidence="2">
    <location>
        <begin position="477"/>
        <end position="489"/>
    </location>
</feature>
<feature type="compositionally biased region" description="Polar residues" evidence="2">
    <location>
        <begin position="504"/>
        <end position="517"/>
    </location>
</feature>
<accession>A4IGN8</accession>
<keyword id="KW-1003">Cell membrane</keyword>
<keyword id="KW-0446">Lipid-binding</keyword>
<keyword id="KW-0472">Membrane</keyword>
<keyword id="KW-1185">Reference proteome</keyword>
<keyword id="KW-0879">Wnt signaling pathway</keyword>
<gene>
    <name type="primary">amer2</name>
    <name type="synonym">fam123a</name>
</gene>
<protein>
    <recommendedName>
        <fullName>APC membrane recruitment protein 2</fullName>
        <shortName>Amer2</shortName>
    </recommendedName>
    <alternativeName>
        <fullName>Protein FAM123A</fullName>
    </alternativeName>
</protein>
<proteinExistence type="evidence at transcript level"/>
<comment type="function">
    <text evidence="1">Negative regulator of the canonical Wnt signaling pathway involved in neuroectodermal patterning. Acts by specifically binding phosphatidylinositol 4,5-bisphosphate (PtdIns(4,5)P2), translocating to the cell membrane and interacting with key regulators of the canonical Wnt signaling pathway, such as components of the beta-catenin destruction complex (By similarity).</text>
</comment>
<comment type="subcellular location">
    <subcellularLocation>
        <location evidence="1">Cell membrane</location>
        <topology evidence="1">Peripheral membrane protein</topology>
    </subcellularLocation>
    <text evidence="1">Translocates to the cell membrane following binding to PtdIns(4,5)P2.</text>
</comment>
<comment type="similarity">
    <text evidence="3">Belongs to the Amer family.</text>
</comment>
<reference key="1">
    <citation type="journal article" date="2010" name="Science">
        <title>The genome of the Western clawed frog Xenopus tropicalis.</title>
        <authorList>
            <person name="Hellsten U."/>
            <person name="Harland R.M."/>
            <person name="Gilchrist M.J."/>
            <person name="Hendrix D."/>
            <person name="Jurka J."/>
            <person name="Kapitonov V."/>
            <person name="Ovcharenko I."/>
            <person name="Putnam N.H."/>
            <person name="Shu S."/>
            <person name="Taher L."/>
            <person name="Blitz I.L."/>
            <person name="Blumberg B."/>
            <person name="Dichmann D.S."/>
            <person name="Dubchak I."/>
            <person name="Amaya E."/>
            <person name="Detter J.C."/>
            <person name="Fletcher R."/>
            <person name="Gerhard D.S."/>
            <person name="Goodstein D."/>
            <person name="Graves T."/>
            <person name="Grigoriev I.V."/>
            <person name="Grimwood J."/>
            <person name="Kawashima T."/>
            <person name="Lindquist E."/>
            <person name="Lucas S.M."/>
            <person name="Mead P.E."/>
            <person name="Mitros T."/>
            <person name="Ogino H."/>
            <person name="Ohta Y."/>
            <person name="Poliakov A.V."/>
            <person name="Pollet N."/>
            <person name="Robert J."/>
            <person name="Salamov A."/>
            <person name="Sater A.K."/>
            <person name="Schmutz J."/>
            <person name="Terry A."/>
            <person name="Vize P.D."/>
            <person name="Warren W.C."/>
            <person name="Wells D."/>
            <person name="Wills A."/>
            <person name="Wilson R.K."/>
            <person name="Zimmerman L.B."/>
            <person name="Zorn A.M."/>
            <person name="Grainger R."/>
            <person name="Grammer T."/>
            <person name="Khokha M.K."/>
            <person name="Richardson P.M."/>
            <person name="Rokhsar D.S."/>
        </authorList>
    </citation>
    <scope>NUCLEOTIDE SEQUENCE [LARGE SCALE GENOMIC DNA]</scope>
</reference>
<reference key="2">
    <citation type="submission" date="2007-03" db="EMBL/GenBank/DDBJ databases">
        <authorList>
            <consortium name="NIH - Xenopus Gene Collection (XGC) project"/>
        </authorList>
    </citation>
    <scope>NUCLEOTIDE SEQUENCE [LARGE SCALE MRNA]</scope>
    <source>
        <tissue>Embryo</tissue>
    </source>
</reference>
<dbReference type="EMBL" id="AAMC01105341">
    <property type="status" value="NOT_ANNOTATED_CDS"/>
    <property type="molecule type" value="Genomic_DNA"/>
</dbReference>
<dbReference type="EMBL" id="BC135184">
    <property type="protein sequence ID" value="AAI35185.1"/>
    <property type="molecule type" value="mRNA"/>
</dbReference>
<dbReference type="RefSeq" id="NP_001263429.1">
    <property type="nucleotide sequence ID" value="NM_001276500.1"/>
</dbReference>
<dbReference type="FunCoup" id="A4IGN8">
    <property type="interactions" value="366"/>
</dbReference>
<dbReference type="STRING" id="8364.ENSXETP00000005040"/>
<dbReference type="PaxDb" id="8364-ENSXETP00000062669"/>
<dbReference type="GeneID" id="100038269"/>
<dbReference type="KEGG" id="xtr:100038269"/>
<dbReference type="AGR" id="Xenbase:XB-GENE-994663"/>
<dbReference type="CTD" id="219287"/>
<dbReference type="Xenbase" id="XB-GENE-994663">
    <property type="gene designation" value="amer2"/>
</dbReference>
<dbReference type="eggNOG" id="ENOG502QU08">
    <property type="taxonomic scope" value="Eukaryota"/>
</dbReference>
<dbReference type="HOGENOM" id="CLU_032195_0_0_1"/>
<dbReference type="InParanoid" id="A4IGN8"/>
<dbReference type="OMA" id="RICLMFA"/>
<dbReference type="OrthoDB" id="9943219at2759"/>
<dbReference type="PhylomeDB" id="A4IGN8"/>
<dbReference type="TreeFam" id="TF333006"/>
<dbReference type="Proteomes" id="UP000008143">
    <property type="component" value="Chromosome 2"/>
</dbReference>
<dbReference type="Bgee" id="ENSXETG00000033579">
    <property type="expression patterns" value="Expressed in brain and 2 other cell types or tissues"/>
</dbReference>
<dbReference type="GO" id="GO:0005886">
    <property type="term" value="C:plasma membrane"/>
    <property type="evidence" value="ECO:0000250"/>
    <property type="project" value="UniProtKB"/>
</dbReference>
<dbReference type="GO" id="GO:0005546">
    <property type="term" value="F:phosphatidylinositol-4,5-bisphosphate binding"/>
    <property type="evidence" value="ECO:0000250"/>
    <property type="project" value="UniProtKB"/>
</dbReference>
<dbReference type="GO" id="GO:0007398">
    <property type="term" value="P:ectoderm development"/>
    <property type="evidence" value="ECO:0000250"/>
    <property type="project" value="UniProtKB"/>
</dbReference>
<dbReference type="GO" id="GO:0090090">
    <property type="term" value="P:negative regulation of canonical Wnt signaling pathway"/>
    <property type="evidence" value="ECO:0000250"/>
    <property type="project" value="UniProtKB"/>
</dbReference>
<dbReference type="GO" id="GO:0016055">
    <property type="term" value="P:Wnt signaling pathway"/>
    <property type="evidence" value="ECO:0007669"/>
    <property type="project" value="UniProtKB-KW"/>
</dbReference>
<dbReference type="InterPro" id="IPR019003">
    <property type="entry name" value="AMER"/>
</dbReference>
<dbReference type="PANTHER" id="PTHR22237:SF1">
    <property type="entry name" value="APC MEMBRANE RECRUITMENT PROTEIN 2"/>
    <property type="match status" value="1"/>
</dbReference>
<dbReference type="PANTHER" id="PTHR22237">
    <property type="entry name" value="APC MEMBRANE RECRUITMENT PROTEIN 2-RELATED"/>
    <property type="match status" value="1"/>
</dbReference>
<dbReference type="Pfam" id="PF09422">
    <property type="entry name" value="AMER"/>
    <property type="match status" value="2"/>
</dbReference>
<name>AMER2_XENTR</name>
<organism>
    <name type="scientific">Xenopus tropicalis</name>
    <name type="common">Western clawed frog</name>
    <name type="synonym">Silurana tropicalis</name>
    <dbReference type="NCBI Taxonomy" id="8364"/>
    <lineage>
        <taxon>Eukaryota</taxon>
        <taxon>Metazoa</taxon>
        <taxon>Chordata</taxon>
        <taxon>Craniata</taxon>
        <taxon>Vertebrata</taxon>
        <taxon>Euteleostomi</taxon>
        <taxon>Amphibia</taxon>
        <taxon>Batrachia</taxon>
        <taxon>Anura</taxon>
        <taxon>Pipoidea</taxon>
        <taxon>Pipidae</taxon>
        <taxon>Xenopodinae</taxon>
        <taxon>Xenopus</taxon>
        <taxon>Silurana</taxon>
    </lineage>
</organism>